<dbReference type="EMBL" id="CP000557">
    <property type="protein sequence ID" value="ABO66496.1"/>
    <property type="molecule type" value="Genomic_DNA"/>
</dbReference>
<dbReference type="RefSeq" id="WP_008878539.1">
    <property type="nucleotide sequence ID" value="NC_009328.1"/>
</dbReference>
<dbReference type="SMR" id="A4IME2"/>
<dbReference type="GeneID" id="87621286"/>
<dbReference type="KEGG" id="gtn:GTNG_1122"/>
<dbReference type="eggNOG" id="COG0184">
    <property type="taxonomic scope" value="Bacteria"/>
</dbReference>
<dbReference type="HOGENOM" id="CLU_148518_0_0_9"/>
<dbReference type="Proteomes" id="UP000001578">
    <property type="component" value="Chromosome"/>
</dbReference>
<dbReference type="GO" id="GO:0022627">
    <property type="term" value="C:cytosolic small ribosomal subunit"/>
    <property type="evidence" value="ECO:0007669"/>
    <property type="project" value="TreeGrafter"/>
</dbReference>
<dbReference type="GO" id="GO:0019843">
    <property type="term" value="F:rRNA binding"/>
    <property type="evidence" value="ECO:0007669"/>
    <property type="project" value="UniProtKB-UniRule"/>
</dbReference>
<dbReference type="GO" id="GO:0003735">
    <property type="term" value="F:structural constituent of ribosome"/>
    <property type="evidence" value="ECO:0007669"/>
    <property type="project" value="InterPro"/>
</dbReference>
<dbReference type="GO" id="GO:0006412">
    <property type="term" value="P:translation"/>
    <property type="evidence" value="ECO:0007669"/>
    <property type="project" value="UniProtKB-UniRule"/>
</dbReference>
<dbReference type="CDD" id="cd00353">
    <property type="entry name" value="Ribosomal_S15p_S13e"/>
    <property type="match status" value="1"/>
</dbReference>
<dbReference type="FunFam" id="1.10.287.10:FF:000002">
    <property type="entry name" value="30S ribosomal protein S15"/>
    <property type="match status" value="1"/>
</dbReference>
<dbReference type="Gene3D" id="6.10.250.3130">
    <property type="match status" value="1"/>
</dbReference>
<dbReference type="Gene3D" id="1.10.287.10">
    <property type="entry name" value="S15/NS1, RNA-binding"/>
    <property type="match status" value="1"/>
</dbReference>
<dbReference type="HAMAP" id="MF_01343_B">
    <property type="entry name" value="Ribosomal_uS15_B"/>
    <property type="match status" value="1"/>
</dbReference>
<dbReference type="InterPro" id="IPR000589">
    <property type="entry name" value="Ribosomal_uS15"/>
</dbReference>
<dbReference type="InterPro" id="IPR005290">
    <property type="entry name" value="Ribosomal_uS15_bac-type"/>
</dbReference>
<dbReference type="InterPro" id="IPR009068">
    <property type="entry name" value="uS15_NS1_RNA-bd_sf"/>
</dbReference>
<dbReference type="NCBIfam" id="TIGR00952">
    <property type="entry name" value="S15_bact"/>
    <property type="match status" value="1"/>
</dbReference>
<dbReference type="PANTHER" id="PTHR23321">
    <property type="entry name" value="RIBOSOMAL PROTEIN S15, BACTERIAL AND ORGANELLAR"/>
    <property type="match status" value="1"/>
</dbReference>
<dbReference type="PANTHER" id="PTHR23321:SF26">
    <property type="entry name" value="SMALL RIBOSOMAL SUBUNIT PROTEIN US15M"/>
    <property type="match status" value="1"/>
</dbReference>
<dbReference type="Pfam" id="PF00312">
    <property type="entry name" value="Ribosomal_S15"/>
    <property type="match status" value="1"/>
</dbReference>
<dbReference type="SMART" id="SM01387">
    <property type="entry name" value="Ribosomal_S15"/>
    <property type="match status" value="1"/>
</dbReference>
<dbReference type="SUPFAM" id="SSF47060">
    <property type="entry name" value="S15/NS1 RNA-binding domain"/>
    <property type="match status" value="1"/>
</dbReference>
<dbReference type="PROSITE" id="PS00362">
    <property type="entry name" value="RIBOSOMAL_S15"/>
    <property type="match status" value="1"/>
</dbReference>
<proteinExistence type="inferred from homology"/>
<accession>A4IME2</accession>
<evidence type="ECO:0000255" key="1">
    <source>
        <dbReference type="HAMAP-Rule" id="MF_01343"/>
    </source>
</evidence>
<evidence type="ECO:0000305" key="2"/>
<protein>
    <recommendedName>
        <fullName evidence="1">Small ribosomal subunit protein uS15</fullName>
    </recommendedName>
    <alternativeName>
        <fullName evidence="2">30S ribosomal protein S15</fullName>
    </alternativeName>
</protein>
<comment type="function">
    <text evidence="1">One of the primary rRNA binding proteins, it binds directly to 16S rRNA where it helps nucleate assembly of the platform of the 30S subunit by binding and bridging several RNA helices of the 16S rRNA.</text>
</comment>
<comment type="function">
    <text evidence="1">Forms an intersubunit bridge (bridge B4) with the 23S rRNA of the 50S subunit in the ribosome.</text>
</comment>
<comment type="subunit">
    <text evidence="1">Part of the 30S ribosomal subunit. Forms a bridge to the 50S subunit in the 70S ribosome, contacting the 23S rRNA.</text>
</comment>
<comment type="similarity">
    <text evidence="1">Belongs to the universal ribosomal protein uS15 family.</text>
</comment>
<sequence>MALTQERKREIIEQFKVHENDTGSPEVQIAILTEQINNLNEHLRVHKKDHHSRRGLLKMVGKRRNLLAYLRNKDVARYRELIEKLGLRR</sequence>
<organism>
    <name type="scientific">Geobacillus thermodenitrificans (strain NG80-2)</name>
    <dbReference type="NCBI Taxonomy" id="420246"/>
    <lineage>
        <taxon>Bacteria</taxon>
        <taxon>Bacillati</taxon>
        <taxon>Bacillota</taxon>
        <taxon>Bacilli</taxon>
        <taxon>Bacillales</taxon>
        <taxon>Anoxybacillaceae</taxon>
        <taxon>Geobacillus</taxon>
    </lineage>
</organism>
<name>RS15_GEOTN</name>
<gene>
    <name evidence="1" type="primary">rpsO</name>
    <name type="ordered locus">GTNG_1122</name>
</gene>
<keyword id="KW-0687">Ribonucleoprotein</keyword>
<keyword id="KW-0689">Ribosomal protein</keyword>
<keyword id="KW-0694">RNA-binding</keyword>
<keyword id="KW-0699">rRNA-binding</keyword>
<reference key="1">
    <citation type="journal article" date="2007" name="Proc. Natl. Acad. Sci. U.S.A.">
        <title>Genome and proteome of long-chain alkane degrading Geobacillus thermodenitrificans NG80-2 isolated from a deep-subsurface oil reservoir.</title>
        <authorList>
            <person name="Feng L."/>
            <person name="Wang W."/>
            <person name="Cheng J."/>
            <person name="Ren Y."/>
            <person name="Zhao G."/>
            <person name="Gao C."/>
            <person name="Tang Y."/>
            <person name="Liu X."/>
            <person name="Han W."/>
            <person name="Peng X."/>
            <person name="Liu R."/>
            <person name="Wang L."/>
        </authorList>
    </citation>
    <scope>NUCLEOTIDE SEQUENCE [LARGE SCALE GENOMIC DNA]</scope>
    <source>
        <strain>NG80-2</strain>
    </source>
</reference>
<feature type="chain" id="PRO_1000054788" description="Small ribosomal subunit protein uS15">
    <location>
        <begin position="1"/>
        <end position="89"/>
    </location>
</feature>